<dbReference type="PIR" id="A02555">
    <property type="entry name" value="GPPMI"/>
</dbReference>
<dbReference type="SMR" id="P02233"/>
<dbReference type="GO" id="GO:0005829">
    <property type="term" value="C:cytosol"/>
    <property type="evidence" value="ECO:0007669"/>
    <property type="project" value="UniProtKB-SubCell"/>
</dbReference>
<dbReference type="GO" id="GO:0005634">
    <property type="term" value="C:nucleus"/>
    <property type="evidence" value="ECO:0007669"/>
    <property type="project" value="UniProtKB-SubCell"/>
</dbReference>
<dbReference type="GO" id="GO:0020037">
    <property type="term" value="F:heme binding"/>
    <property type="evidence" value="ECO:0007669"/>
    <property type="project" value="InterPro"/>
</dbReference>
<dbReference type="GO" id="GO:0046872">
    <property type="term" value="F:metal ion binding"/>
    <property type="evidence" value="ECO:0007669"/>
    <property type="project" value="UniProtKB-KW"/>
</dbReference>
<dbReference type="GO" id="GO:0019825">
    <property type="term" value="F:oxygen binding"/>
    <property type="evidence" value="ECO:0007669"/>
    <property type="project" value="InterPro"/>
</dbReference>
<dbReference type="GO" id="GO:0005344">
    <property type="term" value="F:oxygen carrier activity"/>
    <property type="evidence" value="ECO:0007669"/>
    <property type="project" value="UniProtKB-KW"/>
</dbReference>
<dbReference type="GO" id="GO:0009877">
    <property type="term" value="P:nodulation"/>
    <property type="evidence" value="ECO:0007669"/>
    <property type="project" value="UniProtKB-KW"/>
</dbReference>
<dbReference type="GO" id="GO:0009737">
    <property type="term" value="P:response to abscisic acid"/>
    <property type="evidence" value="ECO:0000270"/>
    <property type="project" value="UniProtKB"/>
</dbReference>
<dbReference type="Gene3D" id="1.10.490.10">
    <property type="entry name" value="Globins"/>
    <property type="match status" value="1"/>
</dbReference>
<dbReference type="InterPro" id="IPR000971">
    <property type="entry name" value="Globin"/>
</dbReference>
<dbReference type="InterPro" id="IPR009050">
    <property type="entry name" value="Globin-like_sf"/>
</dbReference>
<dbReference type="InterPro" id="IPR012292">
    <property type="entry name" value="Globin/Proto"/>
</dbReference>
<dbReference type="InterPro" id="IPR001032">
    <property type="entry name" value="Leghaemoglobin-like"/>
</dbReference>
<dbReference type="InterPro" id="IPR019824">
    <property type="entry name" value="Leghaemoglobin_Fe_BS"/>
</dbReference>
<dbReference type="PANTHER" id="PTHR22924">
    <property type="entry name" value="LEGHEMOGLOBIN-RELATED"/>
    <property type="match status" value="1"/>
</dbReference>
<dbReference type="PANTHER" id="PTHR22924:SF92">
    <property type="entry name" value="NON-SYMBIOTIC HEMOGLOBIN 2"/>
    <property type="match status" value="1"/>
</dbReference>
<dbReference type="Pfam" id="PF00042">
    <property type="entry name" value="Globin"/>
    <property type="match status" value="1"/>
</dbReference>
<dbReference type="PRINTS" id="PR00188">
    <property type="entry name" value="PLANTGLOBIN"/>
</dbReference>
<dbReference type="SUPFAM" id="SSF46458">
    <property type="entry name" value="Globin-like"/>
    <property type="match status" value="1"/>
</dbReference>
<dbReference type="PROSITE" id="PS01033">
    <property type="entry name" value="GLOBIN"/>
    <property type="match status" value="1"/>
</dbReference>
<dbReference type="PROSITE" id="PS00208">
    <property type="entry name" value="PLANT_GLOBIN"/>
    <property type="match status" value="1"/>
</dbReference>
<feature type="initiator methionine" description="Removed" evidence="9">
    <location>
        <position position="1"/>
    </location>
</feature>
<feature type="chain" id="PRO_0000192991" description="Leghemoglobin-1">
    <location>
        <begin position="2"/>
        <end position="148"/>
    </location>
</feature>
<feature type="domain" description="Globin" evidence="6">
    <location>
        <begin position="2"/>
        <end position="146"/>
    </location>
</feature>
<feature type="binding site" evidence="3">
    <location>
        <position position="44"/>
    </location>
    <ligand>
        <name>heme b</name>
        <dbReference type="ChEBI" id="CHEBI:60344"/>
    </ligand>
</feature>
<feature type="binding site" evidence="3">
    <location>
        <position position="61"/>
    </location>
    <ligand>
        <name>O2</name>
        <dbReference type="ChEBI" id="CHEBI:15379"/>
    </ligand>
</feature>
<feature type="binding site" description="proximal binding residue" evidence="6">
    <location>
        <position position="93"/>
    </location>
    <ligand>
        <name>heme b</name>
        <dbReference type="ChEBI" id="CHEBI:60344"/>
    </ligand>
    <ligandPart>
        <name>Fe</name>
        <dbReference type="ChEBI" id="CHEBI:18248"/>
    </ligandPart>
</feature>
<feature type="binding site" evidence="3">
    <location>
        <position position="96"/>
    </location>
    <ligand>
        <name>heme b</name>
        <dbReference type="ChEBI" id="CHEBI:60344"/>
    </ligand>
</feature>
<feature type="modified residue" description="Nitrated tyrosine" evidence="1">
    <location>
        <position position="24"/>
    </location>
</feature>
<feature type="modified residue" description="Nitrated tyrosine" evidence="1">
    <location>
        <position position="29"/>
    </location>
</feature>
<feature type="modified residue" description="Phosphoserine" evidence="4">
    <location>
        <position position="44"/>
    </location>
</feature>
<feature type="modified residue" description="Nitrated tyrosine" evidence="1">
    <location>
        <position position="134"/>
    </location>
</feature>
<feature type="sequence variant">
    <original>P</original>
    <variation>Q</variation>
    <location>
        <position position="22"/>
    </location>
</feature>
<feature type="sequence variant">
    <original>YS</original>
    <variation>NA</variation>
    <location>
        <begin position="24"/>
        <end position="25"/>
    </location>
</feature>
<feature type="sequence variant">
    <original>I</original>
    <variation>T</variation>
    <location>
        <position position="26"/>
    </location>
</feature>
<feature type="sequence variant">
    <original>I</original>
    <variation>V</variation>
    <location>
        <position position="26"/>
    </location>
</feature>
<feature type="sequence variant">
    <original>V</original>
    <variation>I</variation>
    <location>
        <position position="32"/>
    </location>
</feature>
<feature type="sequence variant">
    <original>VQ</original>
    <variation>AG</variation>
    <location>
        <begin position="94"/>
        <end position="95"/>
    </location>
</feature>
<evidence type="ECO:0000250" key="1">
    <source>
        <dbReference type="UniProtKB" id="P02234"/>
    </source>
</evidence>
<evidence type="ECO:0000250" key="2">
    <source>
        <dbReference type="UniProtKB" id="P02237"/>
    </source>
</evidence>
<evidence type="ECO:0000250" key="3">
    <source>
        <dbReference type="UniProtKB" id="P02240"/>
    </source>
</evidence>
<evidence type="ECO:0000250" key="4">
    <source>
        <dbReference type="UniProtKB" id="Q3C1F7"/>
    </source>
</evidence>
<evidence type="ECO:0000250" key="5">
    <source>
        <dbReference type="UniProtKB" id="Q43296"/>
    </source>
</evidence>
<evidence type="ECO:0000255" key="6">
    <source>
        <dbReference type="PROSITE-ProRule" id="PRU00238"/>
    </source>
</evidence>
<evidence type="ECO:0000269" key="7">
    <source>
    </source>
</evidence>
<evidence type="ECO:0000269" key="8">
    <source>
    </source>
</evidence>
<evidence type="ECO:0000269" key="9">
    <source>
    </source>
</evidence>
<evidence type="ECO:0000303" key="10">
    <source>
    </source>
</evidence>
<evidence type="ECO:0000305" key="11"/>
<organism>
    <name type="scientific">Pisum sativum</name>
    <name type="common">Garden pea</name>
    <name type="synonym">Lathyrus oleraceus</name>
    <dbReference type="NCBI Taxonomy" id="3888"/>
    <lineage>
        <taxon>Eukaryota</taxon>
        <taxon>Viridiplantae</taxon>
        <taxon>Streptophyta</taxon>
        <taxon>Embryophyta</taxon>
        <taxon>Tracheophyta</taxon>
        <taxon>Spermatophyta</taxon>
        <taxon>Magnoliopsida</taxon>
        <taxon>eudicotyledons</taxon>
        <taxon>Gunneridae</taxon>
        <taxon>Pentapetalae</taxon>
        <taxon>rosids</taxon>
        <taxon>fabids</taxon>
        <taxon>Fabales</taxon>
        <taxon>Fabaceae</taxon>
        <taxon>Papilionoideae</taxon>
        <taxon>50 kb inversion clade</taxon>
        <taxon>NPAAA clade</taxon>
        <taxon>Hologalegina</taxon>
        <taxon>IRL clade</taxon>
        <taxon>Fabeae</taxon>
        <taxon>Pisum</taxon>
    </lineage>
</organism>
<keyword id="KW-0963">Cytoplasm</keyword>
<keyword id="KW-0903">Direct protein sequencing</keyword>
<keyword id="KW-0349">Heme</keyword>
<keyword id="KW-0408">Iron</keyword>
<keyword id="KW-0479">Metal-binding</keyword>
<keyword id="KW-0944">Nitration</keyword>
<keyword id="KW-0535">Nitrogen fixation</keyword>
<keyword id="KW-0536">Nodulation</keyword>
<keyword id="KW-0539">Nucleus</keyword>
<keyword id="KW-0561">Oxygen transport</keyword>
<keyword id="KW-0597">Phosphoprotein</keyword>
<keyword id="KW-0813">Transport</keyword>
<name>LGB1_PEA</name>
<protein>
    <recommendedName>
        <fullName evidence="10">Leghemoglobin-1</fullName>
    </recommendedName>
    <alternativeName>
        <fullName evidence="10">Leghemoglobin I</fullName>
    </alternativeName>
</protein>
<accession>P02233</accession>
<reference key="1">
    <citation type="journal article" date="1980" name="Biochim. Biophys. Acta">
        <title>The amino acid sequence of pea (Pisum sativum) leghemoglobin.</title>
        <authorList>
            <person name="Lehtovaara P."/>
            <person name="Lappalainen A."/>
            <person name="Ellfolk N."/>
        </authorList>
    </citation>
    <scope>PROTEIN SEQUENCE OF 2-148</scope>
    <scope>TISSUE SPECIFICITY</scope>
    <source>
        <strain>cv. Torstai</strain>
        <tissue>Root nodule</tissue>
    </source>
</reference>
<reference key="2">
    <citation type="journal article" date="2001" name="J. Exp. Bot.">
        <title>Abscisic acid induces a decline in nitrogen fixation that involves leghaemoglobin, but is independent of sucrose synthase activity.</title>
        <authorList>
            <person name="Gonzalez E.M."/>
            <person name="Galvez L."/>
            <person name="Arrese-Igor C."/>
        </authorList>
    </citation>
    <scope>REPRESSION BY ABSCISIC ACID</scope>
    <source>
        <strain>cv. Sugar snap</strain>
    </source>
</reference>
<reference key="3">
    <citation type="journal article" date="2010" name="Plant Cell Environ.">
        <title>Ligands of boron in Pisum sativum nodules are involved in regulation of oxygen concentration and rhizobial infection.</title>
        <authorList>
            <person name="Reguera M."/>
            <person name="Wimmer M."/>
            <person name="Bustos P."/>
            <person name="Goldbach H.E."/>
            <person name="Bolanos L."/>
            <person name="Bonilla I."/>
        </authorList>
    </citation>
    <scope>INDUCTION BY BORON</scope>
    <source>
        <strain>cv. Lincoln</strain>
    </source>
</reference>
<proteinExistence type="evidence at protein level"/>
<sequence>MGFTDKQEALVNSSSEFKQNLPGYSILFYTIVLEKAPAAKGLFSFLKDTAGVEDSPKLQAHAEQVFGLVRDSAAQLRTKGEVVLGNATLGAIHVQKGVTNPHFVVVKEALLQTIKKASGNNWSEELNTAWEVAYDGLATAIKKAMKTA</sequence>
<comment type="function">
    <text evidence="2 5">Leghemoglobin that reversibly binds oxygen O(2) through a pentacoordinated heme iron (By similarity). In root nodules, facilitates the diffusion of oxygen to the bacteroids while preventing the bacterial nitrogenase from being inactivated by buffering dioxygen, nitric oxide and carbon monoxide, and promoting the formation of reactive oxygen species (ROS, e.g. H(2)O(2)) (By similarity). This role is essential for symbiotic nitrogen fixation (SNF) (By similarity).</text>
</comment>
<comment type="subunit">
    <text evidence="3">Monomer.</text>
</comment>
<comment type="subcellular location">
    <subcellularLocation>
        <location evidence="3">Cytoplasm</location>
        <location evidence="3">Cytosol</location>
    </subcellularLocation>
    <subcellularLocation>
        <location evidence="3">Nucleus</location>
    </subcellularLocation>
</comment>
<comment type="tissue specificity">
    <text evidence="9">Root nodules.</text>
</comment>
<comment type="induction">
    <text evidence="7 8">Strongly reduced levels in boron-deficient nodules (PubMed:20132519). Inhibited by abscisic acid (ABA) in parallel with lower nitrogen fixation in nodules (PubMed:11283173).</text>
</comment>
<comment type="PTM">
    <text evidence="1">Nitrated in effective nodules and particularly in hypoxic conditions; this mechanism may play a protective role in the symbiosis by buffering toxic peroxynitrite NO(2)(-). Nitration level decrease during nodule senescence.</text>
</comment>
<comment type="PTM">
    <text evidence="4">Phosphorylation at Ser-44 disrupts the molecular environment of its porphyrin ring oxygen binding pocket, thus leading to a reduced oxygen consumption and to the delivery of oxygen O(2) to symbiosomes.</text>
</comment>
<comment type="similarity">
    <text evidence="11">Belongs to the plant globin family.</text>
</comment>